<gene>
    <name type="primary">MT-ND4L</name>
    <name type="synonym">MTND4L</name>
    <name type="synonym">NADH4L</name>
    <name type="synonym">ND4L</name>
</gene>
<accession>Q15GM1</accession>
<name>NU4LM_PILBA</name>
<proteinExistence type="inferred from homology"/>
<evidence type="ECO:0000250" key="1">
    <source>
        <dbReference type="UniProtKB" id="P03901"/>
    </source>
</evidence>
<evidence type="ECO:0000250" key="2">
    <source>
        <dbReference type="UniProtKB" id="P03902"/>
    </source>
</evidence>
<evidence type="ECO:0000255" key="3"/>
<evidence type="ECO:0000305" key="4"/>
<dbReference type="EC" id="7.1.1.2"/>
<dbReference type="EMBL" id="DQ355301">
    <property type="protein sequence ID" value="ABD39300.1"/>
    <property type="molecule type" value="Genomic_DNA"/>
</dbReference>
<dbReference type="RefSeq" id="YP_659494.1">
    <property type="nucleotide sequence ID" value="NC_008219.1"/>
</dbReference>
<dbReference type="SMR" id="Q15GM1"/>
<dbReference type="GeneID" id="4171579"/>
<dbReference type="CTD" id="4539"/>
<dbReference type="GO" id="GO:0005743">
    <property type="term" value="C:mitochondrial inner membrane"/>
    <property type="evidence" value="ECO:0000250"/>
    <property type="project" value="UniProtKB"/>
</dbReference>
<dbReference type="GO" id="GO:0045271">
    <property type="term" value="C:respiratory chain complex I"/>
    <property type="evidence" value="ECO:0000250"/>
    <property type="project" value="UniProtKB"/>
</dbReference>
<dbReference type="GO" id="GO:0008137">
    <property type="term" value="F:NADH dehydrogenase (ubiquinone) activity"/>
    <property type="evidence" value="ECO:0000250"/>
    <property type="project" value="UniProtKB"/>
</dbReference>
<dbReference type="GO" id="GO:0042773">
    <property type="term" value="P:ATP synthesis coupled electron transport"/>
    <property type="evidence" value="ECO:0007669"/>
    <property type="project" value="InterPro"/>
</dbReference>
<dbReference type="FunFam" id="1.10.287.3510:FF:000002">
    <property type="entry name" value="NADH-ubiquinone oxidoreductase chain 4L"/>
    <property type="match status" value="1"/>
</dbReference>
<dbReference type="Gene3D" id="1.10.287.3510">
    <property type="match status" value="1"/>
</dbReference>
<dbReference type="InterPro" id="IPR001133">
    <property type="entry name" value="NADH_UbQ_OxRdtase_chain4L/K"/>
</dbReference>
<dbReference type="InterPro" id="IPR039428">
    <property type="entry name" value="NUOK/Mnh_C1-like"/>
</dbReference>
<dbReference type="PANTHER" id="PTHR11434:SF0">
    <property type="entry name" value="NADH-UBIQUINONE OXIDOREDUCTASE CHAIN 4L"/>
    <property type="match status" value="1"/>
</dbReference>
<dbReference type="PANTHER" id="PTHR11434">
    <property type="entry name" value="NADH-UBIQUINONE OXIDOREDUCTASE SUBUNIT ND4L"/>
    <property type="match status" value="1"/>
</dbReference>
<dbReference type="Pfam" id="PF00420">
    <property type="entry name" value="Oxidored_q2"/>
    <property type="match status" value="1"/>
</dbReference>
<comment type="function">
    <text evidence="1">Core subunit of the mitochondrial membrane respiratory chain NADH dehydrogenase (Complex I) which catalyzes electron transfer from NADH through the respiratory chain, using ubiquinone as an electron acceptor. Part of the enzyme membrane arm which is embedded in the lipid bilayer and involved in proton translocation.</text>
</comment>
<comment type="catalytic activity">
    <reaction evidence="1">
        <text>a ubiquinone + NADH + 5 H(+)(in) = a ubiquinol + NAD(+) + 4 H(+)(out)</text>
        <dbReference type="Rhea" id="RHEA:29091"/>
        <dbReference type="Rhea" id="RHEA-COMP:9565"/>
        <dbReference type="Rhea" id="RHEA-COMP:9566"/>
        <dbReference type="ChEBI" id="CHEBI:15378"/>
        <dbReference type="ChEBI" id="CHEBI:16389"/>
        <dbReference type="ChEBI" id="CHEBI:17976"/>
        <dbReference type="ChEBI" id="CHEBI:57540"/>
        <dbReference type="ChEBI" id="CHEBI:57945"/>
        <dbReference type="EC" id="7.1.1.2"/>
    </reaction>
    <physiologicalReaction direction="left-to-right" evidence="1">
        <dbReference type="Rhea" id="RHEA:29092"/>
    </physiologicalReaction>
</comment>
<comment type="subunit">
    <text evidence="2">Core subunit of respiratory chain NADH dehydrogenase (Complex I) which is composed of 45 different subunits.</text>
</comment>
<comment type="subcellular location">
    <subcellularLocation>
        <location evidence="2">Mitochondrion inner membrane</location>
        <topology evidence="3">Multi-pass membrane protein</topology>
    </subcellularLocation>
</comment>
<comment type="similarity">
    <text evidence="4">Belongs to the complex I subunit 4L family.</text>
</comment>
<keyword id="KW-0249">Electron transport</keyword>
<keyword id="KW-0472">Membrane</keyword>
<keyword id="KW-0496">Mitochondrion</keyword>
<keyword id="KW-0999">Mitochondrion inner membrane</keyword>
<keyword id="KW-0520">NAD</keyword>
<keyword id="KW-0679">Respiratory chain</keyword>
<keyword id="KW-1278">Translocase</keyword>
<keyword id="KW-0812">Transmembrane</keyword>
<keyword id="KW-1133">Transmembrane helix</keyword>
<keyword id="KW-0813">Transport</keyword>
<keyword id="KW-0830">Ubiquinone</keyword>
<sequence>MPIIYMNITLAFIISLLGMLVYRSHLMSSLLCLEGMMLSLFMMSTLMALNMHFPLANIMPIALLVFAACEAAVGLALLVSISNMYGLDHIHNLNLLQC</sequence>
<reference key="1">
    <citation type="journal article" date="2006" name="Mol. Phylogenet. Evol.">
        <title>Mitochondrial data support an odd-nosed colobine clade.</title>
        <authorList>
            <person name="Sterner K.N."/>
            <person name="Raaum R.L."/>
            <person name="Zhang Y.-P."/>
            <person name="Stewart C.-B.R."/>
            <person name="Disotell T.R."/>
        </authorList>
    </citation>
    <scope>NUCLEOTIDE SEQUENCE [GENOMIC DNA]</scope>
</reference>
<feature type="chain" id="PRO_0000274999" description="NADH-ubiquinone oxidoreductase chain 4L">
    <location>
        <begin position="1"/>
        <end position="98"/>
    </location>
</feature>
<feature type="transmembrane region" description="Helical" evidence="3">
    <location>
        <begin position="1"/>
        <end position="21"/>
    </location>
</feature>
<feature type="transmembrane region" description="Helical" evidence="3">
    <location>
        <begin position="29"/>
        <end position="49"/>
    </location>
</feature>
<feature type="transmembrane region" description="Helical" evidence="3">
    <location>
        <begin position="61"/>
        <end position="81"/>
    </location>
</feature>
<geneLocation type="mitochondrion"/>
<organism>
    <name type="scientific">Piliocolobus badius</name>
    <name type="common">Western red colobus</name>
    <name type="synonym">Procolobus badius</name>
    <dbReference type="NCBI Taxonomy" id="164648"/>
    <lineage>
        <taxon>Eukaryota</taxon>
        <taxon>Metazoa</taxon>
        <taxon>Chordata</taxon>
        <taxon>Craniata</taxon>
        <taxon>Vertebrata</taxon>
        <taxon>Euteleostomi</taxon>
        <taxon>Mammalia</taxon>
        <taxon>Eutheria</taxon>
        <taxon>Euarchontoglires</taxon>
        <taxon>Primates</taxon>
        <taxon>Haplorrhini</taxon>
        <taxon>Catarrhini</taxon>
        <taxon>Cercopithecidae</taxon>
        <taxon>Colobinae</taxon>
        <taxon>Piliocolobus</taxon>
    </lineage>
</organism>
<protein>
    <recommendedName>
        <fullName>NADH-ubiquinone oxidoreductase chain 4L</fullName>
        <ecNumber>7.1.1.2</ecNumber>
    </recommendedName>
    <alternativeName>
        <fullName>NADH dehydrogenase subunit 4L</fullName>
    </alternativeName>
</protein>